<accession>Q53CG1</accession>
<proteinExistence type="evidence at transcript level"/>
<sequence length="150" mass="16487">MLGAALRRCAVAATAWAGPRGLLHSAPTPGPAAAIHSVRCYSHGSSETDEEFDARWVTXFNKPDIDAWELRKGINTLVTYDLVPEPKIIDAALRACRRLNDFASTVRILEAVKDKAGPHKEIYPYVIQELRPTLNELGISTPEELGLDKV</sequence>
<reference key="1">
    <citation type="journal article" date="2005" name="Proc. Natl. Acad. Sci. U.S.A.">
        <title>Rapid electrostatic evolution at the binding site for cytochrome c on cytochrome c oxidase in anthropoid primates.</title>
        <authorList>
            <person name="Schmidt T.R."/>
            <person name="Wildman D.E."/>
            <person name="Uddin M."/>
            <person name="Opazo J.C."/>
            <person name="Goodman M."/>
            <person name="Grossman L.I."/>
        </authorList>
    </citation>
    <scope>NUCLEOTIDE SEQUENCE [MRNA]</scope>
</reference>
<dbReference type="EMBL" id="AY585857">
    <property type="protein sequence ID" value="AAW03186.1"/>
    <property type="molecule type" value="mRNA"/>
</dbReference>
<dbReference type="UniPathway" id="UPA00705"/>
<dbReference type="GO" id="GO:0005743">
    <property type="term" value="C:mitochondrial inner membrane"/>
    <property type="evidence" value="ECO:0007669"/>
    <property type="project" value="UniProtKB-SubCell"/>
</dbReference>
<dbReference type="GO" id="GO:0045277">
    <property type="term" value="C:respiratory chain complex IV"/>
    <property type="evidence" value="ECO:0007669"/>
    <property type="project" value="InterPro"/>
</dbReference>
<dbReference type="GO" id="GO:0046872">
    <property type="term" value="F:metal ion binding"/>
    <property type="evidence" value="ECO:0007669"/>
    <property type="project" value="UniProtKB-KW"/>
</dbReference>
<dbReference type="GO" id="GO:0006123">
    <property type="term" value="P:mitochondrial electron transport, cytochrome c to oxygen"/>
    <property type="evidence" value="ECO:0007669"/>
    <property type="project" value="InterPro"/>
</dbReference>
<dbReference type="CDD" id="cd00923">
    <property type="entry name" value="Cyt_c_Oxidase_Va"/>
    <property type="match status" value="1"/>
</dbReference>
<dbReference type="FunFam" id="1.25.40.40:FF:000002">
    <property type="entry name" value="cytochrome c oxidase subunit 5A, mitochondrial"/>
    <property type="match status" value="1"/>
</dbReference>
<dbReference type="Gene3D" id="1.25.40.40">
    <property type="entry name" value="Cytochrome c oxidase, subunit Va/VI"/>
    <property type="match status" value="1"/>
</dbReference>
<dbReference type="InterPro" id="IPR003204">
    <property type="entry name" value="Cyt_c_oxidase_su5A/6"/>
</dbReference>
<dbReference type="InterPro" id="IPR036545">
    <property type="entry name" value="Cyt_c_oxidase_su5A/6_sf"/>
</dbReference>
<dbReference type="PANTHER" id="PTHR14200">
    <property type="entry name" value="CYTOCHROME C OXIDASE POLYPEPTIDE"/>
    <property type="match status" value="1"/>
</dbReference>
<dbReference type="PANTHER" id="PTHR14200:SF16">
    <property type="entry name" value="CYTOCHROME C OXIDASE SUBUNIT 5A, MITOCHONDRIAL"/>
    <property type="match status" value="1"/>
</dbReference>
<dbReference type="Pfam" id="PF02284">
    <property type="entry name" value="COX5A"/>
    <property type="match status" value="1"/>
</dbReference>
<dbReference type="SUPFAM" id="SSF48479">
    <property type="entry name" value="Cytochrome c oxidase subunit E"/>
    <property type="match status" value="1"/>
</dbReference>
<organism>
    <name type="scientific">Saimiri sciureus</name>
    <name type="common">Common squirrel monkey</name>
    <dbReference type="NCBI Taxonomy" id="9521"/>
    <lineage>
        <taxon>Eukaryota</taxon>
        <taxon>Metazoa</taxon>
        <taxon>Chordata</taxon>
        <taxon>Craniata</taxon>
        <taxon>Vertebrata</taxon>
        <taxon>Euteleostomi</taxon>
        <taxon>Mammalia</taxon>
        <taxon>Eutheria</taxon>
        <taxon>Euarchontoglires</taxon>
        <taxon>Primates</taxon>
        <taxon>Haplorrhini</taxon>
        <taxon>Platyrrhini</taxon>
        <taxon>Cebidae</taxon>
        <taxon>Saimiriinae</taxon>
        <taxon>Saimiri</taxon>
    </lineage>
</organism>
<feature type="transit peptide" description="Mitochondrion" evidence="1">
    <location>
        <begin position="1"/>
        <end position="41"/>
    </location>
</feature>
<feature type="chain" id="PRO_0000253609" description="Cytochrome c oxidase subunit 5A, mitochondrial">
    <location>
        <begin position="42"/>
        <end position="150"/>
    </location>
</feature>
<feature type="short sequence motif" description="SIFI-degron" evidence="4">
    <location>
        <begin position="2"/>
        <end position="17"/>
    </location>
</feature>
<feature type="modified residue" description="N6-acetyllysine" evidence="3">
    <location>
        <position position="87"/>
    </location>
</feature>
<feature type="modified residue" description="N6-acetyllysine" evidence="3">
    <location>
        <position position="113"/>
    </location>
</feature>
<feature type="modified residue" description="Phosphothreonine" evidence="4">
    <location>
        <position position="141"/>
    </location>
</feature>
<comment type="function">
    <text evidence="2">Component of the cytochrome c oxidase, the last enzyme in the mitochondrial electron transport chain which drives oxidative phosphorylation. The respiratory chain contains 3 multisubunit complexes succinate dehydrogenase (complex II, CII), ubiquinol-cytochrome c oxidoreductase (cytochrome b-c1 complex, complex III, CIII) and cytochrome c oxidase (complex IV, CIV), that cooperate to transfer electrons derived from NADH and succinate to molecular oxygen, creating an electrochemical gradient over the inner membrane that drives transmembrane transport and the ATP synthase. Cytochrome c oxidase is the component of the respiratory chain that catalyzes the reduction of oxygen to water. Electrons originating from reduced cytochrome c in the intermembrane space (IMS) are transferred via the dinuclear copper A center (CU(A)) of subunit 2 and heme A of subunit 1 to the active site in subunit 1, a binuclear center (BNC) formed by heme A3 and copper B (CU(B)). The BNC reduces molecular oxygen to 2 water molecules using 4 electrons from cytochrome c in the IMS and 4 protons from the mitochondrial matrix.</text>
</comment>
<comment type="pathway">
    <text evidence="2">Energy metabolism; oxidative phosphorylation.</text>
</comment>
<comment type="subunit">
    <text evidence="1 4">Component of the cytochrome c oxidase (complex IV, CIV), a multisubunit enzyme composed of 14 subunits. The complex is composed of a catalytic core of 3 subunits MT-CO1, MT-CO2 and MT-CO3, encoded in the mitochondrial DNA, and 11 supernumerary subunits COX4I, COX5A, COX5B, COX6A, COX6B, COX6C, COX7A, COX7B, COX7C, COX8 and NDUFA4, which are encoded in the nuclear genome. The complex exists as a monomer or a dimer and forms supercomplexes (SCs) in the inner mitochondrial membrane with NADH-ubiquinone oxidoreductase (complex I, CI) and ubiquinol-cytochrome c oxidoreductase (cytochrome b-c1 complex, complex III, CIII), resulting in different assemblies (supercomplex SCI(1)III(2)IV(1) and megacomplex MCI(2)III(2)IV(2)) (By similarity). Interacts with AFG1L (By similarity). Interacts with RAB5IF (By similarity).</text>
</comment>
<comment type="subcellular location">
    <subcellularLocation>
        <location evidence="1">Mitochondrion inner membrane</location>
        <topology evidence="1">Peripheral membrane protein</topology>
        <orientation evidence="1">Matrix side</orientation>
    </subcellularLocation>
</comment>
<comment type="PTM">
    <text evidence="4">In response to mitochondrial stress, the precursor protein is ubiquitinated by the SIFI complex in the cytoplasm before mitochondrial import, leading to its degradation. Within the SIFI complex, UBR4 initiates ubiquitin chain that are further elongated or branched by KCMF1.</text>
</comment>
<comment type="similarity">
    <text evidence="5">Belongs to the cytochrome c oxidase subunit 5A family.</text>
</comment>
<gene>
    <name type="primary">COX5A</name>
</gene>
<keyword id="KW-0007">Acetylation</keyword>
<keyword id="KW-0349">Heme</keyword>
<keyword id="KW-0408">Iron</keyword>
<keyword id="KW-0472">Membrane</keyword>
<keyword id="KW-0479">Metal-binding</keyword>
<keyword id="KW-0496">Mitochondrion</keyword>
<keyword id="KW-0999">Mitochondrion inner membrane</keyword>
<keyword id="KW-0597">Phosphoprotein</keyword>
<keyword id="KW-0809">Transit peptide</keyword>
<keyword id="KW-0832">Ubl conjugation</keyword>
<protein>
    <recommendedName>
        <fullName>Cytochrome c oxidase subunit 5A, mitochondrial</fullName>
    </recommendedName>
    <alternativeName>
        <fullName>Cytochrome c oxidase polypeptide Va</fullName>
    </alternativeName>
</protein>
<name>COX5A_SAISC</name>
<evidence type="ECO:0000250" key="1">
    <source>
        <dbReference type="UniProtKB" id="P00426"/>
    </source>
</evidence>
<evidence type="ECO:0000250" key="2">
    <source>
        <dbReference type="UniProtKB" id="P00427"/>
    </source>
</evidence>
<evidence type="ECO:0000250" key="3">
    <source>
        <dbReference type="UniProtKB" id="P12787"/>
    </source>
</evidence>
<evidence type="ECO:0000250" key="4">
    <source>
        <dbReference type="UniProtKB" id="P20674"/>
    </source>
</evidence>
<evidence type="ECO:0000305" key="5"/>